<comment type="function">
    <text evidence="1">Core subunit of the mitochondrial membrane respiratory chain NADH dehydrogenase (Complex I) which catalyzes electron transfer from NADH through the respiratory chain, using ubiquinone as an electron acceptor. Part of the enzyme membrane arm which is embedded in the lipid bilayer and involved in proton translocation.</text>
</comment>
<comment type="catalytic activity">
    <reaction evidence="1">
        <text>a ubiquinone + NADH + 5 H(+)(in) = a ubiquinol + NAD(+) + 4 H(+)(out)</text>
        <dbReference type="Rhea" id="RHEA:29091"/>
        <dbReference type="Rhea" id="RHEA-COMP:9565"/>
        <dbReference type="Rhea" id="RHEA-COMP:9566"/>
        <dbReference type="ChEBI" id="CHEBI:15378"/>
        <dbReference type="ChEBI" id="CHEBI:16389"/>
        <dbReference type="ChEBI" id="CHEBI:17976"/>
        <dbReference type="ChEBI" id="CHEBI:57540"/>
        <dbReference type="ChEBI" id="CHEBI:57945"/>
        <dbReference type="EC" id="7.1.1.2"/>
    </reaction>
    <physiologicalReaction direction="left-to-right" evidence="1">
        <dbReference type="Rhea" id="RHEA:29092"/>
    </physiologicalReaction>
</comment>
<comment type="subunit">
    <text evidence="2">Core subunit of respiratory chain NADH dehydrogenase (Complex I) which is composed of 45 different subunits.</text>
</comment>
<comment type="subcellular location">
    <subcellularLocation>
        <location evidence="2">Mitochondrion inner membrane</location>
        <topology evidence="3">Multi-pass membrane protein</topology>
    </subcellularLocation>
</comment>
<comment type="similarity">
    <text evidence="4">Belongs to the complex I subunit 4L family.</text>
</comment>
<reference key="1">
    <citation type="journal article" date="2003" name="Proc. Natl. Acad. Sci. U.S.A.">
        <title>A molecular approach to comparative phylogeography of extant Malagasy lemurs.</title>
        <authorList>
            <person name="Pastorini J."/>
            <person name="Thalmann U."/>
            <person name="Martin R.D."/>
        </authorList>
    </citation>
    <scope>NUCLEOTIDE SEQUENCE [GENOMIC DNA]</scope>
</reference>
<dbReference type="EC" id="7.1.1.2"/>
<dbReference type="EMBL" id="AF224522">
    <property type="protein sequence ID" value="AAN64707.1"/>
    <property type="molecule type" value="Genomic_DNA"/>
</dbReference>
<dbReference type="EMBL" id="AF224523">
    <property type="protein sequence ID" value="AAN64711.1"/>
    <property type="molecule type" value="Genomic_DNA"/>
</dbReference>
<dbReference type="EMBL" id="AF224524">
    <property type="protein sequence ID" value="AAL25158.1"/>
    <property type="molecule type" value="Genomic_DNA"/>
</dbReference>
<dbReference type="SMR" id="Q94XZ5"/>
<dbReference type="GO" id="GO:0005743">
    <property type="term" value="C:mitochondrial inner membrane"/>
    <property type="evidence" value="ECO:0000250"/>
    <property type="project" value="UniProtKB"/>
</dbReference>
<dbReference type="GO" id="GO:0045271">
    <property type="term" value="C:respiratory chain complex I"/>
    <property type="evidence" value="ECO:0000250"/>
    <property type="project" value="UniProtKB"/>
</dbReference>
<dbReference type="GO" id="GO:0008137">
    <property type="term" value="F:NADH dehydrogenase (ubiquinone) activity"/>
    <property type="evidence" value="ECO:0000250"/>
    <property type="project" value="UniProtKB"/>
</dbReference>
<dbReference type="GO" id="GO:0042773">
    <property type="term" value="P:ATP synthesis coupled electron transport"/>
    <property type="evidence" value="ECO:0007669"/>
    <property type="project" value="InterPro"/>
</dbReference>
<dbReference type="FunFam" id="1.10.287.3510:FF:000002">
    <property type="entry name" value="NADH-ubiquinone oxidoreductase chain 4L"/>
    <property type="match status" value="1"/>
</dbReference>
<dbReference type="Gene3D" id="1.10.287.3510">
    <property type="match status" value="1"/>
</dbReference>
<dbReference type="InterPro" id="IPR001133">
    <property type="entry name" value="NADH_UbQ_OxRdtase_chain4L/K"/>
</dbReference>
<dbReference type="InterPro" id="IPR039428">
    <property type="entry name" value="NUOK/Mnh_C1-like"/>
</dbReference>
<dbReference type="PANTHER" id="PTHR11434:SF0">
    <property type="entry name" value="NADH-UBIQUINONE OXIDOREDUCTASE CHAIN 4L"/>
    <property type="match status" value="1"/>
</dbReference>
<dbReference type="PANTHER" id="PTHR11434">
    <property type="entry name" value="NADH-UBIQUINONE OXIDOREDUCTASE SUBUNIT ND4L"/>
    <property type="match status" value="1"/>
</dbReference>
<dbReference type="Pfam" id="PF00420">
    <property type="entry name" value="Oxidored_q2"/>
    <property type="match status" value="1"/>
</dbReference>
<accession>Q94XZ5</accession>
<evidence type="ECO:0000250" key="1">
    <source>
        <dbReference type="UniProtKB" id="P03901"/>
    </source>
</evidence>
<evidence type="ECO:0000250" key="2">
    <source>
        <dbReference type="UniProtKB" id="P03902"/>
    </source>
</evidence>
<evidence type="ECO:0000255" key="3"/>
<evidence type="ECO:0000305" key="4"/>
<organism>
    <name type="scientific">Eulemur coronatus</name>
    <name type="common">Crowned lemur</name>
    <dbReference type="NCBI Taxonomy" id="13514"/>
    <lineage>
        <taxon>Eukaryota</taxon>
        <taxon>Metazoa</taxon>
        <taxon>Chordata</taxon>
        <taxon>Craniata</taxon>
        <taxon>Vertebrata</taxon>
        <taxon>Euteleostomi</taxon>
        <taxon>Mammalia</taxon>
        <taxon>Eutheria</taxon>
        <taxon>Euarchontoglires</taxon>
        <taxon>Primates</taxon>
        <taxon>Strepsirrhini</taxon>
        <taxon>Lemuriformes</taxon>
        <taxon>Lemuridae</taxon>
        <taxon>Eulemur</taxon>
    </lineage>
</organism>
<gene>
    <name type="primary">MT-ND4L</name>
    <name type="synonym">MTND4L</name>
    <name type="synonym">NADH4L</name>
    <name type="synonym">ND4L</name>
</gene>
<proteinExistence type="inferred from homology"/>
<sequence length="98" mass="10773">MPSISTNIILAFITALLGMLIFRSHLMSSLLCLEGMMLSMFILSTLTILNLYFTTSFMMPILLLVFAACEAAVGLALLVTVSNTYGLDYIQNLNLLQC</sequence>
<name>NU4LM_EULCO</name>
<geneLocation type="mitochondrion"/>
<protein>
    <recommendedName>
        <fullName>NADH-ubiquinone oxidoreductase chain 4L</fullName>
        <ecNumber>7.1.1.2</ecNumber>
    </recommendedName>
    <alternativeName>
        <fullName>NADH dehydrogenase subunit 4L</fullName>
    </alternativeName>
</protein>
<feature type="chain" id="PRO_0000275017" description="NADH-ubiquinone oxidoreductase chain 4L">
    <location>
        <begin position="1"/>
        <end position="98"/>
    </location>
</feature>
<feature type="transmembrane region" description="Helical" evidence="3">
    <location>
        <begin position="2"/>
        <end position="22"/>
    </location>
</feature>
<feature type="transmembrane region" description="Helical" evidence="3">
    <location>
        <begin position="29"/>
        <end position="49"/>
    </location>
</feature>
<feature type="transmembrane region" description="Helical" evidence="3">
    <location>
        <begin position="61"/>
        <end position="81"/>
    </location>
</feature>
<keyword id="KW-0249">Electron transport</keyword>
<keyword id="KW-0472">Membrane</keyword>
<keyword id="KW-0496">Mitochondrion</keyword>
<keyword id="KW-0999">Mitochondrion inner membrane</keyword>
<keyword id="KW-0520">NAD</keyword>
<keyword id="KW-0679">Respiratory chain</keyword>
<keyword id="KW-1278">Translocase</keyword>
<keyword id="KW-0812">Transmembrane</keyword>
<keyword id="KW-1133">Transmembrane helix</keyword>
<keyword id="KW-0813">Transport</keyword>
<keyword id="KW-0830">Ubiquinone</keyword>